<sequence>MTIEKNLSDVQQKYADQFQEDVVKSFQTGYGITPDTQIDAGALRREILDDQITMLTWTNEDLIFYRDISRRPAQSTVVKYDQYLRHGNVGHSRFVKEIGVAPVSDPNIRQKTVSMKYVSDTKNMSIASGLVNNIADPSQILTEDAIAVVAKTIEWASFYGDASLTSEVEGEGLEFDGLAKLIDKNNVINAKGNQLTEKHLNEAAVRIGKGFGTATDAYMPIGVHADFVNSILGRQMQLMQDNSGNVNTGYSVNGFYSSRGFIKLHGSTVMENELILDESLQPLPNAPQPAKVTATVETKQKGAFENEEDRAGLSYKVVVNSDDAQSAPSEEVTATVSNVDDGVKLSINVNAMYQQQPQFVSIYRQGKETGMYFLIKRVPVKDAQEDGTIVFVDKNETLPETADVFVGEMSPQVVHLFELLPMMKLPLAQINASITFAVLWYGALALRAPKKWARIKNVRYIAV</sequence>
<dbReference type="EMBL" id="AY176327">
    <property type="protein sequence ID" value="AAO47491.1"/>
    <property type="molecule type" value="Genomic_DNA"/>
</dbReference>
<dbReference type="EMBL" id="KF766114">
    <property type="protein sequence ID" value="AHB80008.1"/>
    <property type="molecule type" value="Genomic_DNA"/>
</dbReference>
<dbReference type="RefSeq" id="YP_009041315.1">
    <property type="nucleotide sequence ID" value="NC_005880.2"/>
</dbReference>
<dbReference type="SMR" id="Q6Y7S3"/>
<dbReference type="KEGG" id="vg:19622175"/>
<dbReference type="OrthoDB" id="2213at10239"/>
<dbReference type="Proteomes" id="UP000001246">
    <property type="component" value="Segment"/>
</dbReference>
<dbReference type="Proteomes" id="UP000211020">
    <property type="component" value="Segment"/>
</dbReference>
<dbReference type="GO" id="GO:0019028">
    <property type="term" value="C:viral capsid"/>
    <property type="evidence" value="ECO:0007669"/>
    <property type="project" value="UniProtKB-KW"/>
</dbReference>
<evidence type="ECO:0000269" key="1">
    <source ref="3"/>
</evidence>
<evidence type="ECO:0000303" key="2">
    <source ref="3"/>
</evidence>
<evidence type="ECO:0000305" key="3"/>
<evidence type="ECO:0000305" key="4">
    <source ref="3"/>
</evidence>
<evidence type="ECO:0000312" key="5">
    <source>
        <dbReference type="EMBL" id="AAO47491.1"/>
    </source>
</evidence>
<evidence type="ECO:0000312" key="6">
    <source>
        <dbReference type="EMBL" id="AHB80008.1"/>
    </source>
</evidence>
<evidence type="ECO:0000312" key="7">
    <source>
        <dbReference type="Proteomes" id="UP000001246"/>
    </source>
</evidence>
<gene>
    <name evidence="5" type="ORF">ORF44</name>
    <name evidence="6" type="ORF">PhageK_093</name>
</gene>
<feature type="propeptide" id="PRO_0000439203" evidence="4">
    <location>
        <begin position="1"/>
        <end position="24"/>
    </location>
</feature>
<feature type="chain" id="PRO_0000439204" description="Major capsid protein" evidence="4">
    <location>
        <begin position="25"/>
        <end position="463"/>
    </location>
</feature>
<comment type="function">
    <text evidence="4">Assembles to form an icosahedral capsid.</text>
</comment>
<comment type="subcellular location">
    <subcellularLocation>
        <location evidence="1">Virion</location>
    </subcellularLocation>
</comment>
<name>CAPSD_BPPGK</name>
<keyword id="KW-0167">Capsid protein</keyword>
<keyword id="KW-0903">Direct protein sequencing</keyword>
<keyword id="KW-0946">Virion</keyword>
<organism evidence="7">
    <name type="scientific">Staphylococcus phage K</name>
    <dbReference type="NCBI Taxonomy" id="221915"/>
    <lineage>
        <taxon>Viruses</taxon>
        <taxon>Duplodnaviria</taxon>
        <taxon>Heunggongvirae</taxon>
        <taxon>Uroviricota</taxon>
        <taxon>Caudoviricetes</taxon>
        <taxon>Herelleviridae</taxon>
        <taxon>Twortvirinae</taxon>
        <taxon>Kayvirus</taxon>
    </lineage>
</organism>
<reference evidence="7" key="1">
    <citation type="journal article" date="2004" name="J. Bacteriol.">
        <title>Genome of staphylococcal phage K: a new lineage of Myoviridae infecting gram-positive bacteria with a low G+C content.</title>
        <authorList>
            <person name="O'Flaherty S."/>
            <person name="Coffey A."/>
            <person name="Edwards R."/>
            <person name="Meaney W."/>
            <person name="Fitzgerald G.F."/>
            <person name="Ross R.P."/>
        </authorList>
    </citation>
    <scope>NUCLEOTIDE SEQUENCE [LARGE SCALE GENOMIC DNA]</scope>
</reference>
<reference evidence="7" key="2">
    <citation type="journal article" date="2014" name="Genome Announc.">
        <title>Revised Genome Sequence of Staphylococcus aureus Bacteriophage K.</title>
        <authorList>
            <person name="Gill J.J."/>
        </authorList>
    </citation>
    <scope>NUCLEOTIDE SEQUENCE [LARGE SCALE GENOMIC DNA]</scope>
</reference>
<reference evidence="3" key="3">
    <citation type="submission" date="2011-05" db="UniProtKB">
        <authorList>
            <person name="Uchiyama J."/>
            <person name="Matsuzaki S."/>
            <person name="Daibata M."/>
        </authorList>
    </citation>
    <scope>PROTEIN SEQUENCE OF 25-39</scope>
    <scope>SUBCELLULAR LOCATION</scope>
</reference>
<proteinExistence type="evidence at protein level"/>
<protein>
    <recommendedName>
        <fullName evidence="2">Major capsid protein</fullName>
    </recommendedName>
    <alternativeName>
        <fullName evidence="3">Major head protein</fullName>
    </alternativeName>
</protein>
<accession>Q6Y7S3</accession>
<organismHost>
    <name type="scientific">Staphylococcus aureus</name>
    <dbReference type="NCBI Taxonomy" id="1280"/>
</organismHost>